<reference key="1">
    <citation type="journal article" date="1992" name="Virology">
        <title>Sequence changes in the live attenuated, cold-adapted variants of influenza A/Leningrad/134/57 (H2N2) virus.</title>
        <authorList>
            <person name="Klimov A.I."/>
            <person name="Cox N.J."/>
            <person name="Yotov W.V."/>
            <person name="Rocha E."/>
            <person name="Alexandrova G.I."/>
            <person name="Kendal A.P."/>
        </authorList>
    </citation>
    <scope>NUCLEOTIDE SEQUENCE [GENOMIC RNA]</scope>
</reference>
<reference key="2">
    <citation type="submission" date="2000-06" db="EMBL/GenBank/DDBJ databases">
        <authorList>
            <person name="Klimov A.I."/>
        </authorList>
    </citation>
    <scope>SEQUENCE REVISION TO 608 AND 655</scope>
</reference>
<feature type="chain" id="PRO_0000078830" description="Polymerase basic protein 2">
    <location>
        <begin position="1"/>
        <end position="759"/>
    </location>
</feature>
<feature type="short sequence motif" description="Nuclear localization signal" evidence="1">
    <location>
        <begin position="736"/>
        <end position="739"/>
    </location>
</feature>
<feature type="site" description="Mammalian adaptation" evidence="1">
    <location>
        <position position="627"/>
    </location>
</feature>
<protein>
    <recommendedName>
        <fullName evidence="1">Polymerase basic protein 2</fullName>
    </recommendedName>
    <alternativeName>
        <fullName evidence="1">RNA-directed RNA polymerase subunit P3</fullName>
    </alternativeName>
</protein>
<evidence type="ECO:0000255" key="1">
    <source>
        <dbReference type="HAMAP-Rule" id="MF_04062"/>
    </source>
</evidence>
<organismHost>
    <name type="scientific">Aves</name>
    <dbReference type="NCBI Taxonomy" id="8782"/>
</organismHost>
<organismHost>
    <name type="scientific">Homo sapiens</name>
    <name type="common">Human</name>
    <dbReference type="NCBI Taxonomy" id="9606"/>
</organismHost>
<proteinExistence type="inferred from homology"/>
<accession>P26126</accession>
<comment type="function">
    <text evidence="1">Plays an essential role in transcription initiation and cap-stealing mechanism, in which cellular capped pre-mRNAs are used to generate primers for viral transcription. Recognizes and binds the 7-methylguanosine-containing cap of the target pre-RNA which is subsequently cleaved after 10-13 nucleotides by the viral protein PA. Plays a role in the initiation of the viral genome replication and modulates the activity of the ribonucleoprotein (RNP) complex. In addition, participates in the inhibition of type I interferon induction through interaction with and inhibition of the host mitochondrial antiviral signaling protein MAVS.</text>
</comment>
<comment type="subunit">
    <text evidence="1">Influenza RNA polymerase is composed of three subunits: PB1, PB2 and PA. Interacts (via N-terminus) with PB1 (via C-terminus). Interacts with nucleoprotein NP (via N-terminus). Interacts (via N-terminus) with host MAVS (via N-terminus); this interaction inhibits host innate immune response.</text>
</comment>
<comment type="subcellular location">
    <subcellularLocation>
        <location evidence="1">Virion</location>
    </subcellularLocation>
    <subcellularLocation>
        <location evidence="1">Host nucleus</location>
    </subcellularLocation>
    <subcellularLocation>
        <location evidence="1">Host mitochondrion</location>
    </subcellularLocation>
</comment>
<comment type="similarity">
    <text evidence="1">Belongs to the influenza viruses PB2 family.</text>
</comment>
<keyword id="KW-1157">Cap snatching</keyword>
<keyword id="KW-1262">Eukaryotic host gene expression shutoff by virus</keyword>
<keyword id="KW-1191">Eukaryotic host transcription shutoff by virus</keyword>
<keyword id="KW-1190">Host gene expression shutoff by virus</keyword>
<keyword id="KW-1045">Host mitochondrion</keyword>
<keyword id="KW-1048">Host nucleus</keyword>
<keyword id="KW-0945">Host-virus interaction</keyword>
<keyword id="KW-1090">Inhibition of host innate immune response by virus</keyword>
<keyword id="KW-1097">Inhibition of host MAVS by virus</keyword>
<keyword id="KW-1113">Inhibition of host RLR pathway by virus</keyword>
<keyword id="KW-1104">Inhibition of host RNA polymerase II by virus</keyword>
<keyword id="KW-0506">mRNA capping</keyword>
<keyword id="KW-0507">mRNA processing</keyword>
<keyword id="KW-0899">Viral immunoevasion</keyword>
<keyword id="KW-1195">Viral transcription</keyword>
<keyword id="KW-0946">Virion</keyword>
<sequence>MERIKELRNLMSQSRTREILTKTTVDHMAIIKKYTSGRQEKNPSLRMKWMMAMKYPITADKRITEMIPERNEQGQTLWSKMSDAGSDRVMVSPLAVTWWNRNGPMTSTVHYPKIYKTYFEKVERLKHGTFGPVHFRNQVKIRRRVDINPGHADLSAKEAQDVIMEVVFPNEVGARILTSESQLTITKEKKEELQDCKISPLMVAYMLERELVRKTRFLPVAGGTSSVYIEVLHLTQGTCWEQMYTPGGEVRNDDVDQSLIIAARNIVRRAAVSADPLASLLEMCHSTQIGGTRMVDILRQNPTEEQAVDICKAAMGLRISSSFSFGGFTFKRTSGSSVKREEEVLTGNLQTLKIRVHEGYEEFTMVGKRATAILRKATRRLIQLIVSGRDEQSIAEAIIVAMVFSQEDCMIKAVRGDLNFVNRANQRLNPMHQLLRHFQKDAKVLFQNWGIEHIDNVMGMIGVLPDMTPSTEMSMRGLRVSKMGVDEYSRAERVVVSIDRFLRVRDQRGNVLLSPEEVSETQGTEKLTITYSSSMMWEINGPESVLVNTYQWIIRNWETVKIQWSQNPTMLYNKMEFEPFQSLVPKAIRGQYSGFVRTLFQQMRDVLGTFDTTQIIKLLPFAAAPPKQSRMQFSSLTVNVRGSGMRILVRGNSPVFNYNKTTKRLTILGKDAGTLTEDPDEGTSGVESAVLRGFLILGKEDRRYGPALSINELSNLAKGEKANVLIGQGDVVLVMKRKRDSSILTDSQTATKRIRMAIN</sequence>
<name>PB2_I57A3</name>
<gene>
    <name evidence="1" type="primary">PB2</name>
</gene>
<organism>
    <name type="scientific">Influenza A virus (strain A/Leningrad/134/47/1957 H2N2)</name>
    <dbReference type="NCBI Taxonomy" id="380983"/>
    <lineage>
        <taxon>Viruses</taxon>
        <taxon>Riboviria</taxon>
        <taxon>Orthornavirae</taxon>
        <taxon>Negarnaviricota</taxon>
        <taxon>Polyploviricotina</taxon>
        <taxon>Insthoviricetes</taxon>
        <taxon>Articulavirales</taxon>
        <taxon>Orthomyxoviridae</taxon>
        <taxon>Alphainfluenzavirus</taxon>
        <taxon>Alphainfluenzavirus influenzae</taxon>
        <taxon>Influenza A virus</taxon>
    </lineage>
</organism>
<dbReference type="EMBL" id="M81587">
    <property type="protein sequence ID" value="AAA19215.2"/>
    <property type="molecule type" value="Genomic_RNA"/>
</dbReference>
<dbReference type="SMR" id="P26126"/>
<dbReference type="GO" id="GO:0033650">
    <property type="term" value="C:host cell mitochondrion"/>
    <property type="evidence" value="ECO:0007669"/>
    <property type="project" value="UniProtKB-SubCell"/>
</dbReference>
<dbReference type="GO" id="GO:0042025">
    <property type="term" value="C:host cell nucleus"/>
    <property type="evidence" value="ECO:0007669"/>
    <property type="project" value="UniProtKB-SubCell"/>
</dbReference>
<dbReference type="GO" id="GO:0044423">
    <property type="term" value="C:virion component"/>
    <property type="evidence" value="ECO:0007669"/>
    <property type="project" value="UniProtKB-UniRule"/>
</dbReference>
<dbReference type="GO" id="GO:0003723">
    <property type="term" value="F:RNA binding"/>
    <property type="evidence" value="ECO:0007669"/>
    <property type="project" value="UniProtKB-UniRule"/>
</dbReference>
<dbReference type="GO" id="GO:0003968">
    <property type="term" value="F:RNA-directed RNA polymerase activity"/>
    <property type="evidence" value="ECO:0007669"/>
    <property type="project" value="UniProtKB-UniRule"/>
</dbReference>
<dbReference type="GO" id="GO:0006370">
    <property type="term" value="P:7-methylguanosine mRNA capping"/>
    <property type="evidence" value="ECO:0007669"/>
    <property type="project" value="UniProtKB-UniRule"/>
</dbReference>
<dbReference type="GO" id="GO:0075526">
    <property type="term" value="P:cap snatching"/>
    <property type="evidence" value="ECO:0007669"/>
    <property type="project" value="UniProtKB-UniRule"/>
</dbReference>
<dbReference type="GO" id="GO:0006351">
    <property type="term" value="P:DNA-templated transcription"/>
    <property type="evidence" value="ECO:0007669"/>
    <property type="project" value="UniProtKB-UniRule"/>
</dbReference>
<dbReference type="GO" id="GO:0039545">
    <property type="term" value="P:symbiont-mediated suppression of host cytoplasmic pattern recognition receptor signaling pathway via inhibition of MAVS activity"/>
    <property type="evidence" value="ECO:0007669"/>
    <property type="project" value="UniProtKB-UniRule"/>
</dbReference>
<dbReference type="GO" id="GO:0039657">
    <property type="term" value="P:symbiont-mediated suppression of host gene expression"/>
    <property type="evidence" value="ECO:0007669"/>
    <property type="project" value="UniProtKB-KW"/>
</dbReference>
<dbReference type="GO" id="GO:0039523">
    <property type="term" value="P:symbiont-mediated suppression of host mRNA transcription via inhibition of RNA polymerase II activity"/>
    <property type="evidence" value="ECO:0007669"/>
    <property type="project" value="UniProtKB-UniRule"/>
</dbReference>
<dbReference type="GO" id="GO:0039694">
    <property type="term" value="P:viral RNA genome replication"/>
    <property type="evidence" value="ECO:0007669"/>
    <property type="project" value="InterPro"/>
</dbReference>
<dbReference type="FunFam" id="3.30.30.90:FF:000001">
    <property type="entry name" value="Polymerase basic protein 2"/>
    <property type="match status" value="1"/>
</dbReference>
<dbReference type="Gene3D" id="3.30.30.90">
    <property type="entry name" value="Polymerase Basic Protein 2, C-terminal domain"/>
    <property type="match status" value="1"/>
</dbReference>
<dbReference type="HAMAP" id="MF_04062">
    <property type="entry name" value="INV_PB2"/>
    <property type="match status" value="1"/>
</dbReference>
<dbReference type="InterPro" id="IPR049110">
    <property type="entry name" value="Flu_PB2_2nd"/>
</dbReference>
<dbReference type="InterPro" id="IPR049114">
    <property type="entry name" value="Flu_PB2_6th"/>
</dbReference>
<dbReference type="InterPro" id="IPR049115">
    <property type="entry name" value="Flu_PB2_C"/>
</dbReference>
<dbReference type="InterPro" id="IPR048298">
    <property type="entry name" value="Flu_PB2_CAP-bd"/>
</dbReference>
<dbReference type="InterPro" id="IPR049111">
    <property type="entry name" value="Flu_PB2_middle"/>
</dbReference>
<dbReference type="InterPro" id="IPR049106">
    <property type="entry name" value="Flu_PB2_N"/>
</dbReference>
<dbReference type="InterPro" id="IPR001591">
    <property type="entry name" value="INV_PB2"/>
</dbReference>
<dbReference type="InterPro" id="IPR049113">
    <property type="entry name" value="PB2_helical"/>
</dbReference>
<dbReference type="InterPro" id="IPR037258">
    <property type="entry name" value="PDB2_C"/>
</dbReference>
<dbReference type="Pfam" id="PF20947">
    <property type="entry name" value="Flu_PB2_1st"/>
    <property type="match status" value="1"/>
</dbReference>
<dbReference type="Pfam" id="PF20948">
    <property type="entry name" value="Flu_PB2_2nd"/>
    <property type="match status" value="1"/>
</dbReference>
<dbReference type="Pfam" id="PF20949">
    <property type="entry name" value="Flu_PB2_3rd"/>
    <property type="match status" value="1"/>
</dbReference>
<dbReference type="Pfam" id="PF20950">
    <property type="entry name" value="Flu_PB2_4th"/>
    <property type="match status" value="1"/>
</dbReference>
<dbReference type="Pfam" id="PF00604">
    <property type="entry name" value="Flu_PB2_5th"/>
    <property type="match status" value="1"/>
</dbReference>
<dbReference type="Pfam" id="PF20951">
    <property type="entry name" value="Flu_PB2_6th"/>
    <property type="match status" value="1"/>
</dbReference>
<dbReference type="Pfam" id="PF20952">
    <property type="entry name" value="Flu_PB2_7th"/>
    <property type="match status" value="1"/>
</dbReference>
<dbReference type="SUPFAM" id="SSF160453">
    <property type="entry name" value="PB2 C-terminal domain-like"/>
    <property type="match status" value="1"/>
</dbReference>